<dbReference type="EMBL" id="U20618">
    <property type="protein sequence ID" value="AAB64510.1"/>
    <property type="molecule type" value="Genomic_DNA"/>
</dbReference>
<dbReference type="EMBL" id="BK006945">
    <property type="protein sequence ID" value="DAA09635.1"/>
    <property type="molecule type" value="Genomic_DNA"/>
</dbReference>
<dbReference type="PIR" id="S53404">
    <property type="entry name" value="S53404"/>
</dbReference>
<dbReference type="RefSeq" id="NP_013431.1">
    <property type="nucleotide sequence ID" value="NM_001182216.1"/>
</dbReference>
<dbReference type="BioGRID" id="31590">
    <property type="interactions" value="69"/>
</dbReference>
<dbReference type="DIP" id="DIP-2138N"/>
<dbReference type="FunCoup" id="Q06177">
    <property type="interactions" value="115"/>
</dbReference>
<dbReference type="IntAct" id="Q06177">
    <property type="interactions" value="9"/>
</dbReference>
<dbReference type="MINT" id="Q06177"/>
<dbReference type="STRING" id="4932.YLR327C"/>
<dbReference type="iPTMnet" id="Q06177"/>
<dbReference type="PaxDb" id="4932-YLR327C"/>
<dbReference type="PeptideAtlas" id="Q06177"/>
<dbReference type="EnsemblFungi" id="YLR327C_mRNA">
    <property type="protein sequence ID" value="YLR327C"/>
    <property type="gene ID" value="YLR327C"/>
</dbReference>
<dbReference type="GeneID" id="851037"/>
<dbReference type="KEGG" id="sce:YLR327C"/>
<dbReference type="AGR" id="SGD:S000004319"/>
<dbReference type="SGD" id="S000004319">
    <property type="gene designation" value="TMA10"/>
</dbReference>
<dbReference type="VEuPathDB" id="FungiDB:YLR327C"/>
<dbReference type="eggNOG" id="ENOG502S4WH">
    <property type="taxonomic scope" value="Eukaryota"/>
</dbReference>
<dbReference type="HOGENOM" id="CLU_186295_0_0_1"/>
<dbReference type="InParanoid" id="Q06177"/>
<dbReference type="OMA" id="KWTVHES"/>
<dbReference type="OrthoDB" id="2122308at2759"/>
<dbReference type="BioCyc" id="YEAST:G3O-32410-MONOMER"/>
<dbReference type="BioGRID-ORCS" id="851037">
    <property type="hits" value="0 hits in 10 CRISPR screens"/>
</dbReference>
<dbReference type="PRO" id="PR:Q06177"/>
<dbReference type="Proteomes" id="UP000002311">
    <property type="component" value="Chromosome XII"/>
</dbReference>
<dbReference type="RNAct" id="Q06177">
    <property type="molecule type" value="protein"/>
</dbReference>
<dbReference type="GO" id="GO:0005737">
    <property type="term" value="C:cytoplasm"/>
    <property type="evidence" value="ECO:0007005"/>
    <property type="project" value="SGD"/>
</dbReference>
<dbReference type="GO" id="GO:0005634">
    <property type="term" value="C:nucleus"/>
    <property type="evidence" value="ECO:0007669"/>
    <property type="project" value="UniProtKB-SubCell"/>
</dbReference>
<accession>Q06177</accession>
<accession>D6VYW9</accession>
<organism>
    <name type="scientific">Saccharomyces cerevisiae (strain ATCC 204508 / S288c)</name>
    <name type="common">Baker's yeast</name>
    <dbReference type="NCBI Taxonomy" id="559292"/>
    <lineage>
        <taxon>Eukaryota</taxon>
        <taxon>Fungi</taxon>
        <taxon>Dikarya</taxon>
        <taxon>Ascomycota</taxon>
        <taxon>Saccharomycotina</taxon>
        <taxon>Saccharomycetes</taxon>
        <taxon>Saccharomycetales</taxon>
        <taxon>Saccharomycetaceae</taxon>
        <taxon>Saccharomyces</taxon>
    </lineage>
</organism>
<sequence length="86" mass="9834">MTRTSKWTVHEAKSNPKYFTHNGNFGESPNHVKRGGYGKGNWGKPGDEINDLIDSGEIKTVFNKTRRGSNSQNNERRLSDLQQYHI</sequence>
<protein>
    <recommendedName>
        <fullName evidence="7">Translation machinery-associated protein 10</fullName>
    </recommendedName>
    <alternativeName>
        <fullName evidence="5">Stabilizing factor 2-like protein 2</fullName>
    </alternativeName>
    <alternativeName>
        <fullName evidence="6">Stabilizing factor 3</fullName>
    </alternativeName>
</protein>
<proteinExistence type="evidence at protein level"/>
<evidence type="ECO:0000256" key="1">
    <source>
        <dbReference type="SAM" id="MobiDB-lite"/>
    </source>
</evidence>
<evidence type="ECO:0000269" key="2">
    <source>
    </source>
</evidence>
<evidence type="ECO:0000269" key="3">
    <source>
    </source>
</evidence>
<evidence type="ECO:0000269" key="4">
    <source>
    </source>
</evidence>
<evidence type="ECO:0000303" key="5">
    <source>
    </source>
</evidence>
<evidence type="ECO:0000303" key="6">
    <source>
    </source>
</evidence>
<evidence type="ECO:0000303" key="7">
    <source>
    </source>
</evidence>
<evidence type="ECO:0000305" key="8"/>
<evidence type="ECO:0000305" key="9">
    <source>
    </source>
</evidence>
<evidence type="ECO:0000305" key="10">
    <source>
    </source>
</evidence>
<evidence type="ECO:0007744" key="11">
    <source>
    </source>
</evidence>
<evidence type="ECO:0007744" key="12">
    <source>
    </source>
</evidence>
<feature type="chain" id="PRO_0000072270" description="Translation machinery-associated protein 10">
    <location>
        <begin position="1"/>
        <end position="86"/>
    </location>
</feature>
<feature type="region of interest" description="Disordered" evidence="1">
    <location>
        <begin position="63"/>
        <end position="86"/>
    </location>
</feature>
<feature type="modified residue" description="Phosphoserine" evidence="12">
    <location>
        <position position="28"/>
    </location>
</feature>
<feature type="modified residue" description="Phosphoserine" evidence="11 12">
    <location>
        <position position="79"/>
    </location>
</feature>
<comment type="function">
    <text evidence="9 10">May be involved in inhibition of the reverse ATPase reaction of mitochondrial F(1)F(0)-type ATP synthase.</text>
</comment>
<comment type="subunit">
    <text evidence="4">Associates with ribosomes.</text>
</comment>
<comment type="subcellular location">
    <subcellularLocation>
        <location evidence="2">Cytoplasm</location>
    </subcellularLocation>
    <subcellularLocation>
        <location evidence="2">Nucleus</location>
    </subcellularLocation>
</comment>
<comment type="miscellaneous">
    <text evidence="3">Present with 504 molecules/cell in log phase SD medium.</text>
</comment>
<comment type="similarity">
    <text evidence="8">Belongs to the STF2 family.</text>
</comment>
<keyword id="KW-0963">Cytoplasm</keyword>
<keyword id="KW-0539">Nucleus</keyword>
<keyword id="KW-0597">Phosphoprotein</keyword>
<keyword id="KW-1185">Reference proteome</keyword>
<gene>
    <name evidence="7" type="primary">TMA10</name>
    <name evidence="5" type="synonym">SFL2</name>
    <name evidence="6" type="synonym">STF3</name>
    <name type="ordered locus">YLR327C</name>
    <name type="ORF">L8543.1</name>
</gene>
<name>TMA10_YEAST</name>
<reference key="1">
    <citation type="journal article" date="1997" name="Nature">
        <title>The nucleotide sequence of Saccharomyces cerevisiae chromosome XII.</title>
        <authorList>
            <person name="Johnston M."/>
            <person name="Hillier L.W."/>
            <person name="Riles L."/>
            <person name="Albermann K."/>
            <person name="Andre B."/>
            <person name="Ansorge W."/>
            <person name="Benes V."/>
            <person name="Brueckner M."/>
            <person name="Delius H."/>
            <person name="Dubois E."/>
            <person name="Duesterhoeft A."/>
            <person name="Entian K.-D."/>
            <person name="Floeth M."/>
            <person name="Goffeau A."/>
            <person name="Hebling U."/>
            <person name="Heumann K."/>
            <person name="Heuss-Neitzel D."/>
            <person name="Hilbert H."/>
            <person name="Hilger F."/>
            <person name="Kleine K."/>
            <person name="Koetter P."/>
            <person name="Louis E.J."/>
            <person name="Messenguy F."/>
            <person name="Mewes H.-W."/>
            <person name="Miosga T."/>
            <person name="Moestl D."/>
            <person name="Mueller-Auer S."/>
            <person name="Nentwich U."/>
            <person name="Obermaier B."/>
            <person name="Piravandi E."/>
            <person name="Pohl T.M."/>
            <person name="Portetelle D."/>
            <person name="Purnelle B."/>
            <person name="Rechmann S."/>
            <person name="Rieger M."/>
            <person name="Rinke M."/>
            <person name="Rose M."/>
            <person name="Scharfe M."/>
            <person name="Scherens B."/>
            <person name="Scholler P."/>
            <person name="Schwager C."/>
            <person name="Schwarz S."/>
            <person name="Underwood A.P."/>
            <person name="Urrestarazu L.A."/>
            <person name="Vandenbol M."/>
            <person name="Verhasselt P."/>
            <person name="Vierendeels F."/>
            <person name="Voet M."/>
            <person name="Volckaert G."/>
            <person name="Voss H."/>
            <person name="Wambutt R."/>
            <person name="Wedler E."/>
            <person name="Wedler H."/>
            <person name="Zimmermann F.K."/>
            <person name="Zollner A."/>
            <person name="Hani J."/>
            <person name="Hoheisel J.D."/>
        </authorList>
    </citation>
    <scope>NUCLEOTIDE SEQUENCE [LARGE SCALE GENOMIC DNA]</scope>
    <source>
        <strain>ATCC 204508 / S288c</strain>
    </source>
</reference>
<reference key="2">
    <citation type="journal article" date="2014" name="G3 (Bethesda)">
        <title>The reference genome sequence of Saccharomyces cerevisiae: Then and now.</title>
        <authorList>
            <person name="Engel S.R."/>
            <person name="Dietrich F.S."/>
            <person name="Fisk D.G."/>
            <person name="Binkley G."/>
            <person name="Balakrishnan R."/>
            <person name="Costanzo M.C."/>
            <person name="Dwight S.S."/>
            <person name="Hitz B.C."/>
            <person name="Karra K."/>
            <person name="Nash R.S."/>
            <person name="Weng S."/>
            <person name="Wong E.D."/>
            <person name="Lloyd P."/>
            <person name="Skrzypek M.S."/>
            <person name="Miyasato S.R."/>
            <person name="Simison M."/>
            <person name="Cherry J.M."/>
        </authorList>
    </citation>
    <scope>GENOME REANNOTATION</scope>
    <source>
        <strain>ATCC 204508 / S288c</strain>
    </source>
</reference>
<reference key="3">
    <citation type="journal article" date="2002" name="Arch. Biochem. Biophys.">
        <title>ATP synthase of yeast: structural insight into the different inhibitory potencies of two regulatory peptides and identification of a new potential regulator.</title>
        <authorList>
            <person name="Hong S."/>
            <person name="Pedersen P.L."/>
        </authorList>
    </citation>
    <scope>FUNCTION</scope>
</reference>
<reference key="4">
    <citation type="journal article" date="2002" name="J. Biol. Chem.">
        <title>Formation of the yeast F1F0-ATP synthase dimeric complex does not require the ATPase inhibitor protein, Inh1.</title>
        <authorList>
            <person name="Dienhart M."/>
            <person name="Pfeiffer K."/>
            <person name="Schagger H."/>
            <person name="Stuart R.A."/>
        </authorList>
    </citation>
    <scope>FUNCTION</scope>
</reference>
<reference key="5">
    <citation type="journal article" date="2003" name="Nature">
        <title>Global analysis of protein localization in budding yeast.</title>
        <authorList>
            <person name="Huh W.-K."/>
            <person name="Falvo J.V."/>
            <person name="Gerke L.C."/>
            <person name="Carroll A.S."/>
            <person name="Howson R.W."/>
            <person name="Weissman J.S."/>
            <person name="O'Shea E.K."/>
        </authorList>
    </citation>
    <scope>SUBCELLULAR LOCATION [LARGE SCALE ANALYSIS]</scope>
</reference>
<reference key="6">
    <citation type="journal article" date="2003" name="Nature">
        <title>Global analysis of protein expression in yeast.</title>
        <authorList>
            <person name="Ghaemmaghami S."/>
            <person name="Huh W.-K."/>
            <person name="Bower K."/>
            <person name="Howson R.W."/>
            <person name="Belle A."/>
            <person name="Dephoure N."/>
            <person name="O'Shea E.K."/>
            <person name="Weissman J.S."/>
        </authorList>
    </citation>
    <scope>LEVEL OF PROTEIN EXPRESSION [LARGE SCALE ANALYSIS]</scope>
</reference>
<reference key="7">
    <citation type="journal article" date="2006" name="Genes Dev.">
        <title>Systematic identification and functional screens of uncharacterized proteins associated with eukaryotic ribosomal complexes.</title>
        <authorList>
            <person name="Fleischer T.C."/>
            <person name="Weaver C.M."/>
            <person name="McAfee K.J."/>
            <person name="Jennings J.L."/>
            <person name="Link A.J."/>
        </authorList>
    </citation>
    <scope>SUBUNIT</scope>
</reference>
<reference key="8">
    <citation type="journal article" date="2008" name="Mol. Cell. Proteomics">
        <title>A multidimensional chromatography technology for in-depth phosphoproteome analysis.</title>
        <authorList>
            <person name="Albuquerque C.P."/>
            <person name="Smolka M.B."/>
            <person name="Payne S.H."/>
            <person name="Bafna V."/>
            <person name="Eng J."/>
            <person name="Zhou H."/>
        </authorList>
    </citation>
    <scope>PHOSPHORYLATION [LARGE SCALE ANALYSIS] AT SER-79</scope>
    <scope>IDENTIFICATION BY MASS SPECTROMETRY [LARGE SCALE ANALYSIS]</scope>
</reference>
<reference key="9">
    <citation type="journal article" date="2009" name="Science">
        <title>Global analysis of Cdk1 substrate phosphorylation sites provides insights into evolution.</title>
        <authorList>
            <person name="Holt L.J."/>
            <person name="Tuch B.B."/>
            <person name="Villen J."/>
            <person name="Johnson A.D."/>
            <person name="Gygi S.P."/>
            <person name="Morgan D.O."/>
        </authorList>
    </citation>
    <scope>PHOSPHORYLATION [LARGE SCALE ANALYSIS] AT SER-28 AND SER-79</scope>
    <scope>IDENTIFICATION BY MASS SPECTROMETRY [LARGE SCALE ANALYSIS]</scope>
</reference>